<dbReference type="EMBL" id="CP000961">
    <property type="protein sequence ID" value="ACA89181.1"/>
    <property type="molecule type" value="Genomic_DNA"/>
</dbReference>
<dbReference type="RefSeq" id="WP_012327497.1">
    <property type="nucleotide sequence ID" value="NC_010506.1"/>
</dbReference>
<dbReference type="SMR" id="B1KQ68"/>
<dbReference type="STRING" id="392500.Swoo_4932"/>
<dbReference type="KEGG" id="swd:Swoo_4932"/>
<dbReference type="eggNOG" id="COG0230">
    <property type="taxonomic scope" value="Bacteria"/>
</dbReference>
<dbReference type="HOGENOM" id="CLU_129938_2_0_6"/>
<dbReference type="Proteomes" id="UP000002168">
    <property type="component" value="Chromosome"/>
</dbReference>
<dbReference type="GO" id="GO:1990904">
    <property type="term" value="C:ribonucleoprotein complex"/>
    <property type="evidence" value="ECO:0007669"/>
    <property type="project" value="UniProtKB-KW"/>
</dbReference>
<dbReference type="GO" id="GO:0005840">
    <property type="term" value="C:ribosome"/>
    <property type="evidence" value="ECO:0007669"/>
    <property type="project" value="UniProtKB-KW"/>
</dbReference>
<dbReference type="GO" id="GO:0003735">
    <property type="term" value="F:structural constituent of ribosome"/>
    <property type="evidence" value="ECO:0007669"/>
    <property type="project" value="InterPro"/>
</dbReference>
<dbReference type="GO" id="GO:0006412">
    <property type="term" value="P:translation"/>
    <property type="evidence" value="ECO:0007669"/>
    <property type="project" value="UniProtKB-UniRule"/>
</dbReference>
<dbReference type="FunFam" id="1.10.287.3980:FF:000001">
    <property type="entry name" value="Mitochondrial ribosomal protein L34"/>
    <property type="match status" value="1"/>
</dbReference>
<dbReference type="Gene3D" id="1.10.287.3980">
    <property type="match status" value="1"/>
</dbReference>
<dbReference type="HAMAP" id="MF_00391">
    <property type="entry name" value="Ribosomal_bL34"/>
    <property type="match status" value="1"/>
</dbReference>
<dbReference type="InterPro" id="IPR000271">
    <property type="entry name" value="Ribosomal_bL34"/>
</dbReference>
<dbReference type="InterPro" id="IPR020939">
    <property type="entry name" value="Ribosomal_bL34_CS"/>
</dbReference>
<dbReference type="NCBIfam" id="TIGR01030">
    <property type="entry name" value="rpmH_bact"/>
    <property type="match status" value="1"/>
</dbReference>
<dbReference type="PANTHER" id="PTHR14503:SF4">
    <property type="entry name" value="LARGE RIBOSOMAL SUBUNIT PROTEIN BL34M"/>
    <property type="match status" value="1"/>
</dbReference>
<dbReference type="PANTHER" id="PTHR14503">
    <property type="entry name" value="MITOCHONDRIAL RIBOSOMAL PROTEIN 34 FAMILY MEMBER"/>
    <property type="match status" value="1"/>
</dbReference>
<dbReference type="Pfam" id="PF00468">
    <property type="entry name" value="Ribosomal_L34"/>
    <property type="match status" value="1"/>
</dbReference>
<dbReference type="PROSITE" id="PS00784">
    <property type="entry name" value="RIBOSOMAL_L34"/>
    <property type="match status" value="1"/>
</dbReference>
<sequence length="45" mass="5170">MSKRTFQPSTLKRKRSHGFRARMATVSGRKVLARRRAKGRARLSA</sequence>
<proteinExistence type="inferred from homology"/>
<organism>
    <name type="scientific">Shewanella woodyi (strain ATCC 51908 / MS32)</name>
    <dbReference type="NCBI Taxonomy" id="392500"/>
    <lineage>
        <taxon>Bacteria</taxon>
        <taxon>Pseudomonadati</taxon>
        <taxon>Pseudomonadota</taxon>
        <taxon>Gammaproteobacteria</taxon>
        <taxon>Alteromonadales</taxon>
        <taxon>Shewanellaceae</taxon>
        <taxon>Shewanella</taxon>
    </lineage>
</organism>
<reference key="1">
    <citation type="submission" date="2008-02" db="EMBL/GenBank/DDBJ databases">
        <title>Complete sequence of Shewanella woodyi ATCC 51908.</title>
        <authorList>
            <consortium name="US DOE Joint Genome Institute"/>
            <person name="Copeland A."/>
            <person name="Lucas S."/>
            <person name="Lapidus A."/>
            <person name="Glavina del Rio T."/>
            <person name="Dalin E."/>
            <person name="Tice H."/>
            <person name="Bruce D."/>
            <person name="Goodwin L."/>
            <person name="Pitluck S."/>
            <person name="Sims D."/>
            <person name="Brettin T."/>
            <person name="Detter J.C."/>
            <person name="Han C."/>
            <person name="Kuske C.R."/>
            <person name="Schmutz J."/>
            <person name="Larimer F."/>
            <person name="Land M."/>
            <person name="Hauser L."/>
            <person name="Kyrpides N."/>
            <person name="Lykidis A."/>
            <person name="Zhao J.-S."/>
            <person name="Richardson P."/>
        </authorList>
    </citation>
    <scope>NUCLEOTIDE SEQUENCE [LARGE SCALE GENOMIC DNA]</scope>
    <source>
        <strain>ATCC 51908 / MS32</strain>
    </source>
</reference>
<accession>B1KQ68</accession>
<feature type="chain" id="PRO_1000196110" description="Large ribosomal subunit protein bL34">
    <location>
        <begin position="1"/>
        <end position="45"/>
    </location>
</feature>
<feature type="region of interest" description="Disordered" evidence="2">
    <location>
        <begin position="1"/>
        <end position="26"/>
    </location>
</feature>
<feature type="compositionally biased region" description="Polar residues" evidence="2">
    <location>
        <begin position="1"/>
        <end position="10"/>
    </location>
</feature>
<feature type="compositionally biased region" description="Basic residues" evidence="2">
    <location>
        <begin position="11"/>
        <end position="20"/>
    </location>
</feature>
<keyword id="KW-1185">Reference proteome</keyword>
<keyword id="KW-0687">Ribonucleoprotein</keyword>
<keyword id="KW-0689">Ribosomal protein</keyword>
<evidence type="ECO:0000255" key="1">
    <source>
        <dbReference type="HAMAP-Rule" id="MF_00391"/>
    </source>
</evidence>
<evidence type="ECO:0000256" key="2">
    <source>
        <dbReference type="SAM" id="MobiDB-lite"/>
    </source>
</evidence>
<evidence type="ECO:0000305" key="3"/>
<gene>
    <name evidence="1" type="primary">rpmH</name>
    <name type="ordered locus">Swoo_4932</name>
</gene>
<name>RL34_SHEWM</name>
<comment type="similarity">
    <text evidence="1">Belongs to the bacterial ribosomal protein bL34 family.</text>
</comment>
<protein>
    <recommendedName>
        <fullName evidence="1">Large ribosomal subunit protein bL34</fullName>
    </recommendedName>
    <alternativeName>
        <fullName evidence="3">50S ribosomal protein L34</fullName>
    </alternativeName>
</protein>